<proteinExistence type="evidence at transcript level"/>
<reference evidence="6" key="1">
    <citation type="journal article" date="1998" name="Science">
        <title>Genome sequence of the nematode C. elegans: a platform for investigating biology.</title>
        <authorList>
            <consortium name="The C. elegans sequencing consortium"/>
        </authorList>
    </citation>
    <scope>NUCLEOTIDE SEQUENCE [LARGE SCALE GENOMIC DNA]</scope>
    <source>
        <strain evidence="6">Bristol N2</strain>
    </source>
</reference>
<reference evidence="4" key="2">
    <citation type="journal article" date="2021" name="J. Neurosci.">
        <title>Caenorhabditis elegans F-Box Protein Promotes Axon Regeneration by Inducing Degradation of the Mad Transcription Factor.</title>
        <authorList>
            <person name="Shimizu T."/>
            <person name="Pastuhov S.I."/>
            <person name="Hanafusa H."/>
            <person name="Sakai Y."/>
            <person name="Todoroki Y."/>
            <person name="Hisamoto N."/>
            <person name="Matsumoto K."/>
        </authorList>
    </citation>
    <scope>FUNCTION</scope>
    <scope>TISSUE SPECIFICITY</scope>
    <scope>DISRUPTION PHENOTYPE</scope>
</reference>
<accession>Q9U232</accession>
<protein>
    <recommendedName>
        <fullName evidence="5">F-box associated domain-containing protein sdz-33</fullName>
    </recommendedName>
    <alternativeName>
        <fullName evidence="7">SKN-1 Dependent Zygotic transcript</fullName>
    </alternativeName>
</protein>
<gene>
    <name evidence="7" type="primary">sdz-33</name>
    <name evidence="3" type="synonym">svh-24</name>
    <name evidence="7" type="ORF">Y56A3A.14</name>
</gene>
<keyword id="KW-1185">Reference proteome</keyword>
<sequence>MATVPFPILCLPDFVLQKSLKLMGVVEHLCLSILSKNIKQLIATLKGYPKCFSFKFVPFTSLTVVGERFKHFSFRFDIDESSQNANLRSYTDEGTYITLTVPGFTVKHWIEHVAYVLCRNNSIKLVLWEPNIDEVYEIVKDMRTVEVVIVSSEIQSCHLLKLFPSLRYLGVYKAPISAQILTYNLLHLEVKTKVTLNDILISNCSNFSISGNDVSDKELNFFMRSWIKGSNPRLTKFYIRNSLRVRDPYLETVLFQNIDYIETHKKIYWRTFEISRPDGTKADVMWDPLYNSYFNMTVQH</sequence>
<feature type="chain" id="PRO_0000462203" description="F-box associated domain-containing protein sdz-33">
    <location>
        <begin position="1"/>
        <end position="300"/>
    </location>
</feature>
<feature type="domain" description="F-box" evidence="1">
    <location>
        <begin position="5"/>
        <end position="51"/>
    </location>
</feature>
<name>SDZ33_CAEEL</name>
<evidence type="ECO:0000255" key="1">
    <source>
        <dbReference type="PROSITE-ProRule" id="PRU00080"/>
    </source>
</evidence>
<evidence type="ECO:0000269" key="2">
    <source>
    </source>
</evidence>
<evidence type="ECO:0000303" key="3">
    <source>
    </source>
</evidence>
<evidence type="ECO:0000305" key="4"/>
<evidence type="ECO:0000305" key="5">
    <source>
    </source>
</evidence>
<evidence type="ECO:0000312" key="6">
    <source>
        <dbReference type="Proteomes" id="UP000001940"/>
    </source>
</evidence>
<evidence type="ECO:0000312" key="7">
    <source>
        <dbReference type="WormBase" id="Y56A3A.14"/>
    </source>
</evidence>
<comment type="function">
    <text evidence="2">Substrate recognition component of E3 ubiquitin-protein ligase complex which mediates the ubiquitination and subsequent proteasomal degradation of target proteins such as mdl-1 (PubMed:33514673). Positively regulates axon regeneration by targeting mdl-1 for ubiquitin-mediated degradation; probably thereby reducing levels of mdl-1-mxl-1 heterodimers, allowing free mxl-1 to form complexes with tdpt-1 and thus inhibiting tdpt-1-dependent sumoylation of ets-4 (PubMed:33514673).</text>
</comment>
<comment type="tissue specificity">
    <text evidence="2">Expressed in D-type motor neuron cell bodies.</text>
</comment>
<comment type="disruption phenotype">
    <text evidence="2">Reduces the frequency of axon regeneration (PubMed:33514673). Results in shorter regenerating axons while non-regenerating axons have larger bulb-like structures in comparison to the wild-type (PubMed:33514673).</text>
</comment>
<organism evidence="6">
    <name type="scientific">Caenorhabditis elegans</name>
    <dbReference type="NCBI Taxonomy" id="6239"/>
    <lineage>
        <taxon>Eukaryota</taxon>
        <taxon>Metazoa</taxon>
        <taxon>Ecdysozoa</taxon>
        <taxon>Nematoda</taxon>
        <taxon>Chromadorea</taxon>
        <taxon>Rhabditida</taxon>
        <taxon>Rhabditina</taxon>
        <taxon>Rhabditomorpha</taxon>
        <taxon>Rhabditoidea</taxon>
        <taxon>Rhabditidae</taxon>
        <taxon>Peloderinae</taxon>
        <taxon>Caenorhabditis</taxon>
    </lineage>
</organism>
<dbReference type="EMBL" id="BX284603">
    <property type="protein sequence ID" value="CAB60508.1"/>
    <property type="molecule type" value="Genomic_DNA"/>
</dbReference>
<dbReference type="RefSeq" id="NP_499546.1">
    <property type="nucleotide sequence ID" value="NM_067145.4"/>
</dbReference>
<dbReference type="FunCoup" id="Q9U232">
    <property type="interactions" value="820"/>
</dbReference>
<dbReference type="STRING" id="6239.Y56A3A.14.1"/>
<dbReference type="PaxDb" id="6239-Y56A3A.14"/>
<dbReference type="EnsemblMetazoa" id="Y56A3A.14.1">
    <property type="protein sequence ID" value="Y56A3A.14.1"/>
    <property type="gene ID" value="WBGene00013233"/>
</dbReference>
<dbReference type="GeneID" id="176621"/>
<dbReference type="KEGG" id="cel:CELE_Y56A3A.14"/>
<dbReference type="UCSC" id="Y56A3A.14">
    <property type="organism name" value="c. elegans"/>
</dbReference>
<dbReference type="AGR" id="WB:WBGene00013233"/>
<dbReference type="CTD" id="176621"/>
<dbReference type="WormBase" id="Y56A3A.14">
    <property type="protein sequence ID" value="CE22581"/>
    <property type="gene ID" value="WBGene00013233"/>
    <property type="gene designation" value="sdz-33"/>
</dbReference>
<dbReference type="GeneTree" id="ENSGT00970000196764"/>
<dbReference type="HOGENOM" id="CLU_028840_1_4_1"/>
<dbReference type="InParanoid" id="Q9U232"/>
<dbReference type="PhylomeDB" id="Q9U232"/>
<dbReference type="Proteomes" id="UP000001940">
    <property type="component" value="Chromosome III"/>
</dbReference>
<dbReference type="Bgee" id="WBGene00013233">
    <property type="expression patterns" value="Expressed in embryo and 4 other cell types or tissues"/>
</dbReference>
<dbReference type="InterPro" id="IPR012885">
    <property type="entry name" value="F-box-assoc_dom_typ2"/>
</dbReference>
<dbReference type="InterPro" id="IPR001810">
    <property type="entry name" value="F-box_dom"/>
</dbReference>
<dbReference type="InterPro" id="IPR053222">
    <property type="entry name" value="Zygotic_Embryogenesis-Asso"/>
</dbReference>
<dbReference type="PANTHER" id="PTHR22899">
    <property type="entry name" value="CYCLIN-RELATED F-BOX FAMILY"/>
    <property type="match status" value="1"/>
</dbReference>
<dbReference type="PANTHER" id="PTHR22899:SF0">
    <property type="entry name" value="F-BOX ASSOCIATED DOMAIN-CONTAINING PROTEIN-RELATED"/>
    <property type="match status" value="1"/>
</dbReference>
<dbReference type="Pfam" id="PF00646">
    <property type="entry name" value="F-box"/>
    <property type="match status" value="1"/>
</dbReference>
<dbReference type="Pfam" id="PF07735">
    <property type="entry name" value="FBA_2"/>
    <property type="match status" value="1"/>
</dbReference>